<accession>P0CU69</accession>
<dbReference type="EC" id="1.-.-.-" evidence="7"/>
<dbReference type="SMR" id="P0CU69"/>
<dbReference type="OMA" id="DNIPGCH"/>
<dbReference type="OrthoDB" id="10254221at2759"/>
<dbReference type="GO" id="GO:0004497">
    <property type="term" value="F:monooxygenase activity"/>
    <property type="evidence" value="ECO:0007669"/>
    <property type="project" value="UniProtKB-KW"/>
</dbReference>
<dbReference type="Gene3D" id="3.40.50.720">
    <property type="entry name" value="NAD(P)-binding Rossmann-like Domain"/>
    <property type="match status" value="1"/>
</dbReference>
<dbReference type="InterPro" id="IPR016040">
    <property type="entry name" value="NAD(P)-bd_dom"/>
</dbReference>
<dbReference type="InterPro" id="IPR036291">
    <property type="entry name" value="NAD(P)-bd_dom_sf"/>
</dbReference>
<dbReference type="PANTHER" id="PTHR15020">
    <property type="entry name" value="FLAVIN REDUCTASE-RELATED"/>
    <property type="match status" value="1"/>
</dbReference>
<dbReference type="PANTHER" id="PTHR15020:SF37">
    <property type="entry name" value="OXIDOREDUCTASE MDPK"/>
    <property type="match status" value="1"/>
</dbReference>
<dbReference type="Pfam" id="PF13460">
    <property type="entry name" value="NAD_binding_10"/>
    <property type="match status" value="1"/>
</dbReference>
<dbReference type="SUPFAM" id="SSF51735">
    <property type="entry name" value="NAD(P)-binding Rossmann-fold domains"/>
    <property type="match status" value="1"/>
</dbReference>
<evidence type="ECO:0000269" key="1">
    <source>
    </source>
</evidence>
<evidence type="ECO:0000269" key="2">
    <source>
    </source>
</evidence>
<evidence type="ECO:0000269" key="3">
    <source>
    </source>
</evidence>
<evidence type="ECO:0000269" key="4">
    <source>
    </source>
</evidence>
<evidence type="ECO:0000303" key="5">
    <source>
    </source>
</evidence>
<evidence type="ECO:0000305" key="6"/>
<evidence type="ECO:0000305" key="7">
    <source>
    </source>
</evidence>
<organism>
    <name type="scientific">Passalora fulva</name>
    <name type="common">Tomato leaf mold</name>
    <name type="synonym">Cladosporium fulvum</name>
    <dbReference type="NCBI Taxonomy" id="5499"/>
    <lineage>
        <taxon>Eukaryota</taxon>
        <taxon>Fungi</taxon>
        <taxon>Dikarya</taxon>
        <taxon>Ascomycota</taxon>
        <taxon>Pezizomycotina</taxon>
        <taxon>Dothideomycetes</taxon>
        <taxon>Dothideomycetidae</taxon>
        <taxon>Mycosphaerellales</taxon>
        <taxon>Mycosphaerellaceae</taxon>
        <taxon>Fulvia</taxon>
    </lineage>
</organism>
<name>CLAK_PASFU</name>
<sequence length="270" mass="29610">MDSKVTTYAVLGSTGNCGSALIRNLLGKPQSRVHAFCRNKKKLLRLIPEIADSKQVEVFEGGMQDHDLLAACIKNTRAVFMCISTNDNVPGCRLSQDSAIALVKVMRELGYDKPDGGPNGPAPKLLLLSSGTIDPHLSKHLPSLLLWILKRSASHVYADLEKAEEFLRAQESWLTTIYIKPGALSVDKKRGYELSLTEQKDPVSYLDLSAGMIEAADDPEGRWDLKNISVNCGSTPAGFPDGTILCILMGLLRHYFPWTHAYLPMGMGPK</sequence>
<gene>
    <name evidence="5" type="primary">claK</name>
    <name type="ORF">Clafu184397</name>
</gene>
<keyword id="KW-0503">Monooxygenase</keyword>
<keyword id="KW-0560">Oxidoreductase</keyword>
<comment type="function">
    <text evidence="1 3">Oxidoreductase; part of the gene cluster that mediates the biosynthesis of the bianthraquinone cladofulvin, a conidial pigment not required for virulence but that plays a role in fitness and resistance to environmental stresses including UV light and low-temperature stress (PubMed:24465762, PubMed:27274078). The pathway begins with the synthesis of atrochrysone thioester by the polyketide synthase (PKS) claG. The atrochrysone carboxyl ACP thioesterase claF then breaks the thioester bond and releases the atrochrysone carboxylic acid from claG (PubMed:27274078). This compound is decarboxylated by claH to yield emodin, which is further converted to chrysophanol hydroquinone by the reductase claC and the dehydratase claB (PubMed:27274078). The cytochrome monooxygenase P450 claM then catalyzes the dimerization of nataloe-emodin to cladofulvin (PubMed:27274078).</text>
</comment>
<comment type="pathway">
    <text evidence="7">Pigment biosynthesis.</text>
</comment>
<comment type="induction">
    <text evidence="1 2 3 4">Expression is positively regulated by the transcriptional regulator wor1 (PubMed:24521437, PubMed:27274078). Expression is down-regulated during biotrophic growth within tomato leaves (PubMed:27997759). The expression is induced at later stages of infection when conidiophores emerge from the plant and produce conidia (PubMed:24465762).</text>
</comment>
<comment type="similarity">
    <text evidence="6">Belongs to the avfA family.</text>
</comment>
<reference key="1">
    <citation type="journal article" date="2014" name="Mol. Microbiol.">
        <title>Functional analysis of the conserved transcriptional regulator CfWor1 in Cladosporium fulvum reveals diverse roles in the virulence of plant pathogenic fungi.</title>
        <authorList>
            <person name="Okmen B."/>
            <person name="Collemare J."/>
            <person name="Griffiths S."/>
            <person name="van der Burgt A."/>
            <person name="Cox R."/>
            <person name="de Wit P.J."/>
        </authorList>
    </citation>
    <scope>INDUCTION</scope>
</reference>
<reference key="2">
    <citation type="journal article" date="2014" name="PLoS ONE">
        <title>Secondary metabolism and biotrophic lifestyle in the tomato pathogen Cladosporium fulvum.</title>
        <authorList>
            <person name="Collemare J."/>
            <person name="Griffiths S."/>
            <person name="Iida Y."/>
            <person name="Karimi Jashni M."/>
            <person name="Battaglia E."/>
            <person name="Cox R.J."/>
            <person name="de Wit P.J."/>
        </authorList>
    </citation>
    <scope>IDENTIFICATION</scope>
    <scope>FUNCTION</scope>
    <scope>INDUCTION</scope>
    <scope>PATHWAY</scope>
</reference>
<reference key="3">
    <citation type="journal article" date="2016" name="Proc. Natl. Acad. Sci. U.S.A.">
        <title>Elucidation of cladofulvin biosynthesis reveals a cytochrome P450 monooxygenase required for anthraquinone dimerization.</title>
        <authorList>
            <person name="Griffiths S."/>
            <person name="Mesarich C.H."/>
            <person name="Saccomanno B."/>
            <person name="Vaisberg A."/>
            <person name="De Wit P.J."/>
            <person name="Cox R."/>
            <person name="Collemare J."/>
        </authorList>
    </citation>
    <scope>INDUCTION</scope>
    <scope>FUNCTION</scope>
</reference>
<reference key="4">
    <citation type="journal article" date="2018" name="Mol. Plant Pathol.">
        <title>Down-regulation of cladofulvin biosynthesis is required for biotrophic growth of Cladosporium fulvum on tomato.</title>
        <authorList>
            <person name="Griffiths S."/>
            <person name="Mesarich C.H."/>
            <person name="Overdijk E.J.R."/>
            <person name="Saccomanno B."/>
            <person name="de Wit P.J.G.M."/>
            <person name="Collemare J."/>
        </authorList>
    </citation>
    <scope>INDUCTION</scope>
</reference>
<proteinExistence type="evidence at transcript level"/>
<feature type="chain" id="PRO_0000445889" description="Oxidoreductase claK">
    <location>
        <begin position="1"/>
        <end position="270"/>
    </location>
</feature>
<protein>
    <recommendedName>
        <fullName evidence="5">Oxidoreductase claK</fullName>
        <ecNumber evidence="7">1.-.-.-</ecNumber>
    </recommendedName>
    <alternativeName>
        <fullName evidence="5">Cladofulvin biosynthesis cluster protein K</fullName>
    </alternativeName>
</protein>